<protein>
    <recommendedName>
        <fullName evidence="1">ATP-dependent Clp protease proteolytic subunit</fullName>
        <ecNumber evidence="1">3.4.21.92</ecNumber>
    </recommendedName>
    <alternativeName>
        <fullName evidence="1">Endopeptidase Clp</fullName>
    </alternativeName>
</protein>
<organism>
    <name type="scientific">Xylella fastidiosa (strain M12)</name>
    <dbReference type="NCBI Taxonomy" id="405440"/>
    <lineage>
        <taxon>Bacteria</taxon>
        <taxon>Pseudomonadati</taxon>
        <taxon>Pseudomonadota</taxon>
        <taxon>Gammaproteobacteria</taxon>
        <taxon>Lysobacterales</taxon>
        <taxon>Lysobacteraceae</taxon>
        <taxon>Xylella</taxon>
    </lineage>
</organism>
<proteinExistence type="inferred from homology"/>
<keyword id="KW-0963">Cytoplasm</keyword>
<keyword id="KW-0378">Hydrolase</keyword>
<keyword id="KW-0645">Protease</keyword>
<keyword id="KW-0720">Serine protease</keyword>
<reference key="1">
    <citation type="journal article" date="2010" name="J. Bacteriol.">
        <title>Whole genome sequences of two Xylella fastidiosa strains (M12 and M23) causing almond leaf scorch disease in California.</title>
        <authorList>
            <person name="Chen J."/>
            <person name="Xie G."/>
            <person name="Han S."/>
            <person name="Chertkov O."/>
            <person name="Sims D."/>
            <person name="Civerolo E.L."/>
        </authorList>
    </citation>
    <scope>NUCLEOTIDE SEQUENCE [LARGE SCALE GENOMIC DNA]</scope>
    <source>
        <strain>M12</strain>
    </source>
</reference>
<feature type="chain" id="PRO_1000124729" description="ATP-dependent Clp protease proteolytic subunit">
    <location>
        <begin position="1"/>
        <end position="208"/>
    </location>
</feature>
<feature type="active site" description="Nucleophile" evidence="1">
    <location>
        <position position="105"/>
    </location>
</feature>
<feature type="active site" evidence="1">
    <location>
        <position position="130"/>
    </location>
</feature>
<evidence type="ECO:0000255" key="1">
    <source>
        <dbReference type="HAMAP-Rule" id="MF_00444"/>
    </source>
</evidence>
<comment type="function">
    <text evidence="1">Cleaves peptides in various proteins in a process that requires ATP hydrolysis. Has a chymotrypsin-like activity. Plays a major role in the degradation of misfolded proteins.</text>
</comment>
<comment type="catalytic activity">
    <reaction evidence="1">
        <text>Hydrolysis of proteins to small peptides in the presence of ATP and magnesium. alpha-casein is the usual test substrate. In the absence of ATP, only oligopeptides shorter than five residues are hydrolyzed (such as succinyl-Leu-Tyr-|-NHMec, and Leu-Tyr-Leu-|-Tyr-Trp, in which cleavage of the -Tyr-|-Leu- and -Tyr-|-Trp bonds also occurs).</text>
        <dbReference type="EC" id="3.4.21.92"/>
    </reaction>
</comment>
<comment type="subunit">
    <text evidence="1">Fourteen ClpP subunits assemble into 2 heptameric rings which stack back to back to give a disk-like structure with a central cavity, resembling the structure of eukaryotic proteasomes.</text>
</comment>
<comment type="subcellular location">
    <subcellularLocation>
        <location evidence="1">Cytoplasm</location>
    </subcellularLocation>
</comment>
<comment type="similarity">
    <text evidence="1">Belongs to the peptidase S14 family.</text>
</comment>
<sequence>MDDVTKALNLVPMVVEQTSRGERAYDIYSRLLKERLIFLVGPIDDYMANLIVAQLLFLEAENPEKDINIYINSPGGVVTAGMAIYDTMQYIKPAVSTICVGQAASMGALLLASGASGKRYALPNSRVMIHQPLGGFQGQATDVDIHAREILALRARLNEILAKHTGQSLETIAHDTERDNFKSAVDAQAYGLVDQVFGQRQEELIQSS</sequence>
<accession>B0U5N1</accession>
<gene>
    <name evidence="1" type="primary">clpP</name>
    <name type="ordered locus">Xfasm12_0529</name>
</gene>
<name>CLPP_XYLFM</name>
<dbReference type="EC" id="3.4.21.92" evidence="1"/>
<dbReference type="EMBL" id="CP000941">
    <property type="protein sequence ID" value="ACA11535.1"/>
    <property type="molecule type" value="Genomic_DNA"/>
</dbReference>
<dbReference type="RefSeq" id="WP_004086552.1">
    <property type="nucleotide sequence ID" value="NC_010513.1"/>
</dbReference>
<dbReference type="SMR" id="B0U5N1"/>
<dbReference type="MEROPS" id="S14.001"/>
<dbReference type="KEGG" id="xfm:Xfasm12_0529"/>
<dbReference type="HOGENOM" id="CLU_058707_3_3_6"/>
<dbReference type="GO" id="GO:0005737">
    <property type="term" value="C:cytoplasm"/>
    <property type="evidence" value="ECO:0007669"/>
    <property type="project" value="UniProtKB-SubCell"/>
</dbReference>
<dbReference type="GO" id="GO:0009368">
    <property type="term" value="C:endopeptidase Clp complex"/>
    <property type="evidence" value="ECO:0007669"/>
    <property type="project" value="TreeGrafter"/>
</dbReference>
<dbReference type="GO" id="GO:0004176">
    <property type="term" value="F:ATP-dependent peptidase activity"/>
    <property type="evidence" value="ECO:0007669"/>
    <property type="project" value="InterPro"/>
</dbReference>
<dbReference type="GO" id="GO:0051117">
    <property type="term" value="F:ATPase binding"/>
    <property type="evidence" value="ECO:0007669"/>
    <property type="project" value="TreeGrafter"/>
</dbReference>
<dbReference type="GO" id="GO:0004252">
    <property type="term" value="F:serine-type endopeptidase activity"/>
    <property type="evidence" value="ECO:0007669"/>
    <property type="project" value="UniProtKB-UniRule"/>
</dbReference>
<dbReference type="GO" id="GO:0006515">
    <property type="term" value="P:protein quality control for misfolded or incompletely synthesized proteins"/>
    <property type="evidence" value="ECO:0007669"/>
    <property type="project" value="TreeGrafter"/>
</dbReference>
<dbReference type="CDD" id="cd07017">
    <property type="entry name" value="S14_ClpP_2"/>
    <property type="match status" value="1"/>
</dbReference>
<dbReference type="FunFam" id="3.90.226.10:FF:000001">
    <property type="entry name" value="ATP-dependent Clp protease proteolytic subunit"/>
    <property type="match status" value="1"/>
</dbReference>
<dbReference type="Gene3D" id="3.90.226.10">
    <property type="entry name" value="2-enoyl-CoA Hydratase, Chain A, domain 1"/>
    <property type="match status" value="1"/>
</dbReference>
<dbReference type="HAMAP" id="MF_00444">
    <property type="entry name" value="ClpP"/>
    <property type="match status" value="1"/>
</dbReference>
<dbReference type="InterPro" id="IPR001907">
    <property type="entry name" value="ClpP"/>
</dbReference>
<dbReference type="InterPro" id="IPR029045">
    <property type="entry name" value="ClpP/crotonase-like_dom_sf"/>
</dbReference>
<dbReference type="InterPro" id="IPR023562">
    <property type="entry name" value="ClpP/TepA"/>
</dbReference>
<dbReference type="InterPro" id="IPR033135">
    <property type="entry name" value="ClpP_His_AS"/>
</dbReference>
<dbReference type="InterPro" id="IPR018215">
    <property type="entry name" value="ClpP_Ser_AS"/>
</dbReference>
<dbReference type="NCBIfam" id="TIGR00493">
    <property type="entry name" value="clpP"/>
    <property type="match status" value="1"/>
</dbReference>
<dbReference type="NCBIfam" id="NF001368">
    <property type="entry name" value="PRK00277.1"/>
    <property type="match status" value="1"/>
</dbReference>
<dbReference type="NCBIfam" id="NF009205">
    <property type="entry name" value="PRK12553.1"/>
    <property type="match status" value="1"/>
</dbReference>
<dbReference type="PANTHER" id="PTHR10381">
    <property type="entry name" value="ATP-DEPENDENT CLP PROTEASE PROTEOLYTIC SUBUNIT"/>
    <property type="match status" value="1"/>
</dbReference>
<dbReference type="PANTHER" id="PTHR10381:SF70">
    <property type="entry name" value="ATP-DEPENDENT CLP PROTEASE PROTEOLYTIC SUBUNIT"/>
    <property type="match status" value="1"/>
</dbReference>
<dbReference type="Pfam" id="PF00574">
    <property type="entry name" value="CLP_protease"/>
    <property type="match status" value="1"/>
</dbReference>
<dbReference type="PRINTS" id="PR00127">
    <property type="entry name" value="CLPPROTEASEP"/>
</dbReference>
<dbReference type="SUPFAM" id="SSF52096">
    <property type="entry name" value="ClpP/crotonase"/>
    <property type="match status" value="1"/>
</dbReference>
<dbReference type="PROSITE" id="PS00382">
    <property type="entry name" value="CLP_PROTEASE_HIS"/>
    <property type="match status" value="1"/>
</dbReference>
<dbReference type="PROSITE" id="PS00381">
    <property type="entry name" value="CLP_PROTEASE_SER"/>
    <property type="match status" value="1"/>
</dbReference>